<reference key="1">
    <citation type="journal article" date="2007" name="J. Bacteriol.">
        <title>Complete genome of acute rheumatic fever-associated serotype M5 Streptococcus pyogenes strain Manfredo.</title>
        <authorList>
            <person name="Holden M.T.G."/>
            <person name="Scott A."/>
            <person name="Cherevach I."/>
            <person name="Chillingworth T."/>
            <person name="Churcher C."/>
            <person name="Cronin A."/>
            <person name="Dowd L."/>
            <person name="Feltwell T."/>
            <person name="Hamlin N."/>
            <person name="Holroyd S."/>
            <person name="Jagels K."/>
            <person name="Moule S."/>
            <person name="Mungall K."/>
            <person name="Quail M.A."/>
            <person name="Price C."/>
            <person name="Rabbinowitsch E."/>
            <person name="Sharp S."/>
            <person name="Skelton J."/>
            <person name="Whitehead S."/>
            <person name="Barrell B.G."/>
            <person name="Kehoe M."/>
            <person name="Parkhill J."/>
        </authorList>
    </citation>
    <scope>NUCLEOTIDE SEQUENCE [LARGE SCALE GENOMIC DNA]</scope>
    <source>
        <strain>Manfredo</strain>
    </source>
</reference>
<name>MURC_STRPG</name>
<evidence type="ECO:0000255" key="1">
    <source>
        <dbReference type="HAMAP-Rule" id="MF_00046"/>
    </source>
</evidence>
<dbReference type="EC" id="6.3.2.8" evidence="1"/>
<dbReference type="EMBL" id="AM295007">
    <property type="protein sequence ID" value="CAM30886.1"/>
    <property type="molecule type" value="Genomic_DNA"/>
</dbReference>
<dbReference type="RefSeq" id="WP_011184193.1">
    <property type="nucleotide sequence ID" value="NC_009332.1"/>
</dbReference>
<dbReference type="SMR" id="A2RGA7"/>
<dbReference type="KEGG" id="spf:SpyM51565"/>
<dbReference type="HOGENOM" id="CLU_028104_1_0_9"/>
<dbReference type="UniPathway" id="UPA00219"/>
<dbReference type="GO" id="GO:0005737">
    <property type="term" value="C:cytoplasm"/>
    <property type="evidence" value="ECO:0007669"/>
    <property type="project" value="UniProtKB-SubCell"/>
</dbReference>
<dbReference type="GO" id="GO:0005524">
    <property type="term" value="F:ATP binding"/>
    <property type="evidence" value="ECO:0007669"/>
    <property type="project" value="UniProtKB-UniRule"/>
</dbReference>
<dbReference type="GO" id="GO:0008763">
    <property type="term" value="F:UDP-N-acetylmuramate-L-alanine ligase activity"/>
    <property type="evidence" value="ECO:0007669"/>
    <property type="project" value="UniProtKB-UniRule"/>
</dbReference>
<dbReference type="GO" id="GO:0051301">
    <property type="term" value="P:cell division"/>
    <property type="evidence" value="ECO:0007669"/>
    <property type="project" value="UniProtKB-KW"/>
</dbReference>
<dbReference type="GO" id="GO:0071555">
    <property type="term" value="P:cell wall organization"/>
    <property type="evidence" value="ECO:0007669"/>
    <property type="project" value="UniProtKB-KW"/>
</dbReference>
<dbReference type="GO" id="GO:0009252">
    <property type="term" value="P:peptidoglycan biosynthetic process"/>
    <property type="evidence" value="ECO:0007669"/>
    <property type="project" value="UniProtKB-UniRule"/>
</dbReference>
<dbReference type="GO" id="GO:0008360">
    <property type="term" value="P:regulation of cell shape"/>
    <property type="evidence" value="ECO:0007669"/>
    <property type="project" value="UniProtKB-KW"/>
</dbReference>
<dbReference type="Gene3D" id="3.90.190.20">
    <property type="entry name" value="Mur ligase, C-terminal domain"/>
    <property type="match status" value="1"/>
</dbReference>
<dbReference type="Gene3D" id="3.40.1190.10">
    <property type="entry name" value="Mur-like, catalytic domain"/>
    <property type="match status" value="1"/>
</dbReference>
<dbReference type="Gene3D" id="3.40.50.720">
    <property type="entry name" value="NAD(P)-binding Rossmann-like Domain"/>
    <property type="match status" value="1"/>
</dbReference>
<dbReference type="HAMAP" id="MF_00046">
    <property type="entry name" value="MurC"/>
    <property type="match status" value="1"/>
</dbReference>
<dbReference type="InterPro" id="IPR036565">
    <property type="entry name" value="Mur-like_cat_sf"/>
</dbReference>
<dbReference type="InterPro" id="IPR004101">
    <property type="entry name" value="Mur_ligase_C"/>
</dbReference>
<dbReference type="InterPro" id="IPR036615">
    <property type="entry name" value="Mur_ligase_C_dom_sf"/>
</dbReference>
<dbReference type="InterPro" id="IPR013221">
    <property type="entry name" value="Mur_ligase_cen"/>
</dbReference>
<dbReference type="InterPro" id="IPR000713">
    <property type="entry name" value="Mur_ligase_N"/>
</dbReference>
<dbReference type="InterPro" id="IPR050061">
    <property type="entry name" value="MurCDEF_pg_biosynth"/>
</dbReference>
<dbReference type="InterPro" id="IPR005758">
    <property type="entry name" value="UDP-N-AcMur_Ala_ligase_MurC"/>
</dbReference>
<dbReference type="NCBIfam" id="TIGR01082">
    <property type="entry name" value="murC"/>
    <property type="match status" value="1"/>
</dbReference>
<dbReference type="PANTHER" id="PTHR43445:SF3">
    <property type="entry name" value="UDP-N-ACETYLMURAMATE--L-ALANINE LIGASE"/>
    <property type="match status" value="1"/>
</dbReference>
<dbReference type="PANTHER" id="PTHR43445">
    <property type="entry name" value="UDP-N-ACETYLMURAMATE--L-ALANINE LIGASE-RELATED"/>
    <property type="match status" value="1"/>
</dbReference>
<dbReference type="Pfam" id="PF01225">
    <property type="entry name" value="Mur_ligase"/>
    <property type="match status" value="1"/>
</dbReference>
<dbReference type="Pfam" id="PF02875">
    <property type="entry name" value="Mur_ligase_C"/>
    <property type="match status" value="1"/>
</dbReference>
<dbReference type="Pfam" id="PF08245">
    <property type="entry name" value="Mur_ligase_M"/>
    <property type="match status" value="1"/>
</dbReference>
<dbReference type="SUPFAM" id="SSF51984">
    <property type="entry name" value="MurCD N-terminal domain"/>
    <property type="match status" value="1"/>
</dbReference>
<dbReference type="SUPFAM" id="SSF53623">
    <property type="entry name" value="MurD-like peptide ligases, catalytic domain"/>
    <property type="match status" value="1"/>
</dbReference>
<dbReference type="SUPFAM" id="SSF53244">
    <property type="entry name" value="MurD-like peptide ligases, peptide-binding domain"/>
    <property type="match status" value="1"/>
</dbReference>
<feature type="chain" id="PRO_1000004425" description="UDP-N-acetylmuramate--L-alanine ligase">
    <location>
        <begin position="1"/>
        <end position="442"/>
    </location>
</feature>
<feature type="binding site" evidence="1">
    <location>
        <begin position="109"/>
        <end position="115"/>
    </location>
    <ligand>
        <name>ATP</name>
        <dbReference type="ChEBI" id="CHEBI:30616"/>
    </ligand>
</feature>
<gene>
    <name evidence="1" type="primary">murC</name>
    <name type="ordered locus">SpyM51565</name>
</gene>
<accession>A2RGA7</accession>
<comment type="function">
    <text evidence="1">Cell wall formation.</text>
</comment>
<comment type="catalytic activity">
    <reaction evidence="1">
        <text>UDP-N-acetyl-alpha-D-muramate + L-alanine + ATP = UDP-N-acetyl-alpha-D-muramoyl-L-alanine + ADP + phosphate + H(+)</text>
        <dbReference type="Rhea" id="RHEA:23372"/>
        <dbReference type="ChEBI" id="CHEBI:15378"/>
        <dbReference type="ChEBI" id="CHEBI:30616"/>
        <dbReference type="ChEBI" id="CHEBI:43474"/>
        <dbReference type="ChEBI" id="CHEBI:57972"/>
        <dbReference type="ChEBI" id="CHEBI:70757"/>
        <dbReference type="ChEBI" id="CHEBI:83898"/>
        <dbReference type="ChEBI" id="CHEBI:456216"/>
        <dbReference type="EC" id="6.3.2.8"/>
    </reaction>
</comment>
<comment type="pathway">
    <text evidence="1">Cell wall biogenesis; peptidoglycan biosynthesis.</text>
</comment>
<comment type="subcellular location">
    <subcellularLocation>
        <location evidence="1">Cytoplasm</location>
    </subcellularLocation>
</comment>
<comment type="similarity">
    <text evidence="1">Belongs to the MurCDEF family.</text>
</comment>
<protein>
    <recommendedName>
        <fullName evidence="1">UDP-N-acetylmuramate--L-alanine ligase</fullName>
        <ecNumber evidence="1">6.3.2.8</ecNumber>
    </recommendedName>
    <alternativeName>
        <fullName evidence="1">UDP-N-acetylmuramoyl-L-alanine synthetase</fullName>
    </alternativeName>
</protein>
<proteinExistence type="inferred from homology"/>
<organism>
    <name type="scientific">Streptococcus pyogenes serotype M5 (strain Manfredo)</name>
    <dbReference type="NCBI Taxonomy" id="160491"/>
    <lineage>
        <taxon>Bacteria</taxon>
        <taxon>Bacillati</taxon>
        <taxon>Bacillota</taxon>
        <taxon>Bacilli</taxon>
        <taxon>Lactobacillales</taxon>
        <taxon>Streptococcaceae</taxon>
        <taxon>Streptococcus</taxon>
    </lineage>
</organism>
<keyword id="KW-0067">ATP-binding</keyword>
<keyword id="KW-0131">Cell cycle</keyword>
<keyword id="KW-0132">Cell division</keyword>
<keyword id="KW-0133">Cell shape</keyword>
<keyword id="KW-0961">Cell wall biogenesis/degradation</keyword>
<keyword id="KW-0963">Cytoplasm</keyword>
<keyword id="KW-0436">Ligase</keyword>
<keyword id="KW-0547">Nucleotide-binding</keyword>
<keyword id="KW-0573">Peptidoglycan synthesis</keyword>
<sequence>MSKTYHFIGIKGSGMSALALMLHQMGHMVQGSDVEKYYFTQRGLEQAGITILPFSEDNITPDMELIVGNAFRENNKEVAYALRHQIPFKRYHDFLGDFMKSFISFAVAGAHGKTSTTGLLSHVLKNITDTSYLIGDGTGRGSANAQYFVFESDEYERHFMPYHPEYSIITNIDFDHPDYFTGIADVRNAFNDYAKQVKKALFVYGEDDELKKIEAPAPIYYYGFEEGNDFIAYDITRTTNGSDFKVKHQGEVIGQFHVPAYGKHNILNATAVIANLFVAGIDMALVADHLKTFSGVKRRFTEKIINDTIIIDDFAHHPTEIVATIDAARQKYPSKEIVAIFQPHTFTRTIALLEDFACALNEADSVYLAQIYGSAREVDKGEVKVEDLAAKIIKPSQVVTVENVSPLLDHDNAVYVFMGAGDIQLYEHSFEELLANLTKNNQ</sequence>